<sequence>MNFQSSSSGSIVAIVPAAGIGSRMGATIPKQYLPLLDKPILAHTLQRLLSHPAIDKVIVAVSAEDSWFDSLAEARDPKLTRVLGGKERADSVLAALSALPDSCDAWALVHDAARPCLTHGDIDALLASRLTYPQGAILAMPVRDTMKRAATDGSIETTVCREALWHALTPQLFPAERLKQHLEQALAAGVSITDEASAMEWAGVYPGLVSGRADNIKVTHPDDLQLAGLFLQAQQQHT</sequence>
<keyword id="KW-0414">Isoprene biosynthesis</keyword>
<keyword id="KW-0548">Nucleotidyltransferase</keyword>
<keyword id="KW-1185">Reference proteome</keyword>
<keyword id="KW-0808">Transferase</keyword>
<name>ISPD_SHEAM</name>
<proteinExistence type="inferred from homology"/>
<gene>
    <name evidence="1" type="primary">ispD</name>
    <name type="ordered locus">Sama_1038</name>
</gene>
<accession>A1S4D9</accession>
<reference key="1">
    <citation type="submission" date="2006-12" db="EMBL/GenBank/DDBJ databases">
        <title>Complete sequence of Shewanella amazonensis SB2B.</title>
        <authorList>
            <consortium name="US DOE Joint Genome Institute"/>
            <person name="Copeland A."/>
            <person name="Lucas S."/>
            <person name="Lapidus A."/>
            <person name="Barry K."/>
            <person name="Detter J.C."/>
            <person name="Glavina del Rio T."/>
            <person name="Hammon N."/>
            <person name="Israni S."/>
            <person name="Dalin E."/>
            <person name="Tice H."/>
            <person name="Pitluck S."/>
            <person name="Munk A.C."/>
            <person name="Brettin T."/>
            <person name="Bruce D."/>
            <person name="Han C."/>
            <person name="Tapia R."/>
            <person name="Gilna P."/>
            <person name="Schmutz J."/>
            <person name="Larimer F."/>
            <person name="Land M."/>
            <person name="Hauser L."/>
            <person name="Kyrpides N."/>
            <person name="Mikhailova N."/>
            <person name="Fredrickson J."/>
            <person name="Richardson P."/>
        </authorList>
    </citation>
    <scope>NUCLEOTIDE SEQUENCE [LARGE SCALE GENOMIC DNA]</scope>
    <source>
        <strain>ATCC BAA-1098 / SB2B</strain>
    </source>
</reference>
<comment type="function">
    <text evidence="1">Catalyzes the formation of 4-diphosphocytidyl-2-C-methyl-D-erythritol from CTP and 2-C-methyl-D-erythritol 4-phosphate (MEP).</text>
</comment>
<comment type="catalytic activity">
    <reaction evidence="1">
        <text>2-C-methyl-D-erythritol 4-phosphate + CTP + H(+) = 4-CDP-2-C-methyl-D-erythritol + diphosphate</text>
        <dbReference type="Rhea" id="RHEA:13429"/>
        <dbReference type="ChEBI" id="CHEBI:15378"/>
        <dbReference type="ChEBI" id="CHEBI:33019"/>
        <dbReference type="ChEBI" id="CHEBI:37563"/>
        <dbReference type="ChEBI" id="CHEBI:57823"/>
        <dbReference type="ChEBI" id="CHEBI:58262"/>
        <dbReference type="EC" id="2.7.7.60"/>
    </reaction>
</comment>
<comment type="pathway">
    <text evidence="1">Isoprenoid biosynthesis; isopentenyl diphosphate biosynthesis via DXP pathway; isopentenyl diphosphate from 1-deoxy-D-xylulose 5-phosphate: step 2/6.</text>
</comment>
<comment type="similarity">
    <text evidence="1">Belongs to the IspD/TarI cytidylyltransferase family. IspD subfamily.</text>
</comment>
<evidence type="ECO:0000255" key="1">
    <source>
        <dbReference type="HAMAP-Rule" id="MF_00108"/>
    </source>
</evidence>
<organism>
    <name type="scientific">Shewanella amazonensis (strain ATCC BAA-1098 / SB2B)</name>
    <dbReference type="NCBI Taxonomy" id="326297"/>
    <lineage>
        <taxon>Bacteria</taxon>
        <taxon>Pseudomonadati</taxon>
        <taxon>Pseudomonadota</taxon>
        <taxon>Gammaproteobacteria</taxon>
        <taxon>Alteromonadales</taxon>
        <taxon>Shewanellaceae</taxon>
        <taxon>Shewanella</taxon>
    </lineage>
</organism>
<feature type="chain" id="PRO_1000022947" description="2-C-methyl-D-erythritol 4-phosphate cytidylyltransferase">
    <location>
        <begin position="1"/>
        <end position="238"/>
    </location>
</feature>
<feature type="site" description="Transition state stabilizer" evidence="1">
    <location>
        <position position="23"/>
    </location>
</feature>
<feature type="site" description="Transition state stabilizer" evidence="1">
    <location>
        <position position="30"/>
    </location>
</feature>
<feature type="site" description="Positions MEP for the nucleophilic attack" evidence="1">
    <location>
        <position position="161"/>
    </location>
</feature>
<feature type="site" description="Positions MEP for the nucleophilic attack" evidence="1">
    <location>
        <position position="217"/>
    </location>
</feature>
<dbReference type="EC" id="2.7.7.60" evidence="1"/>
<dbReference type="EMBL" id="CP000507">
    <property type="protein sequence ID" value="ABL99245.1"/>
    <property type="molecule type" value="Genomic_DNA"/>
</dbReference>
<dbReference type="RefSeq" id="WP_011759154.1">
    <property type="nucleotide sequence ID" value="NC_008700.1"/>
</dbReference>
<dbReference type="SMR" id="A1S4D9"/>
<dbReference type="STRING" id="326297.Sama_1038"/>
<dbReference type="KEGG" id="saz:Sama_1038"/>
<dbReference type="eggNOG" id="COG1211">
    <property type="taxonomic scope" value="Bacteria"/>
</dbReference>
<dbReference type="HOGENOM" id="CLU_061281_3_1_6"/>
<dbReference type="OrthoDB" id="9806837at2"/>
<dbReference type="UniPathway" id="UPA00056">
    <property type="reaction ID" value="UER00093"/>
</dbReference>
<dbReference type="Proteomes" id="UP000009175">
    <property type="component" value="Chromosome"/>
</dbReference>
<dbReference type="GO" id="GO:0050518">
    <property type="term" value="F:2-C-methyl-D-erythritol 4-phosphate cytidylyltransferase activity"/>
    <property type="evidence" value="ECO:0007669"/>
    <property type="project" value="UniProtKB-UniRule"/>
</dbReference>
<dbReference type="GO" id="GO:0019288">
    <property type="term" value="P:isopentenyl diphosphate biosynthetic process, methylerythritol 4-phosphate pathway"/>
    <property type="evidence" value="ECO:0007669"/>
    <property type="project" value="UniProtKB-UniRule"/>
</dbReference>
<dbReference type="CDD" id="cd02516">
    <property type="entry name" value="CDP-ME_synthetase"/>
    <property type="match status" value="1"/>
</dbReference>
<dbReference type="FunFam" id="3.90.550.10:FF:000003">
    <property type="entry name" value="2-C-methyl-D-erythritol 4-phosphate cytidylyltransferase"/>
    <property type="match status" value="1"/>
</dbReference>
<dbReference type="Gene3D" id="3.90.550.10">
    <property type="entry name" value="Spore Coat Polysaccharide Biosynthesis Protein SpsA, Chain A"/>
    <property type="match status" value="1"/>
</dbReference>
<dbReference type="HAMAP" id="MF_00108">
    <property type="entry name" value="IspD"/>
    <property type="match status" value="1"/>
</dbReference>
<dbReference type="InterPro" id="IPR001228">
    <property type="entry name" value="IspD"/>
</dbReference>
<dbReference type="InterPro" id="IPR034683">
    <property type="entry name" value="IspD/TarI"/>
</dbReference>
<dbReference type="InterPro" id="IPR050088">
    <property type="entry name" value="IspD/TarI_cytidylyltransf_bact"/>
</dbReference>
<dbReference type="InterPro" id="IPR029044">
    <property type="entry name" value="Nucleotide-diphossugar_trans"/>
</dbReference>
<dbReference type="NCBIfam" id="TIGR00453">
    <property type="entry name" value="ispD"/>
    <property type="match status" value="1"/>
</dbReference>
<dbReference type="PANTHER" id="PTHR32125">
    <property type="entry name" value="2-C-METHYL-D-ERYTHRITOL 4-PHOSPHATE CYTIDYLYLTRANSFERASE, CHLOROPLASTIC"/>
    <property type="match status" value="1"/>
</dbReference>
<dbReference type="PANTHER" id="PTHR32125:SF4">
    <property type="entry name" value="2-C-METHYL-D-ERYTHRITOL 4-PHOSPHATE CYTIDYLYLTRANSFERASE, CHLOROPLASTIC"/>
    <property type="match status" value="1"/>
</dbReference>
<dbReference type="Pfam" id="PF01128">
    <property type="entry name" value="IspD"/>
    <property type="match status" value="1"/>
</dbReference>
<dbReference type="SUPFAM" id="SSF53448">
    <property type="entry name" value="Nucleotide-diphospho-sugar transferases"/>
    <property type="match status" value="1"/>
</dbReference>
<protein>
    <recommendedName>
        <fullName evidence="1">2-C-methyl-D-erythritol 4-phosphate cytidylyltransferase</fullName>
        <ecNumber evidence="1">2.7.7.60</ecNumber>
    </recommendedName>
    <alternativeName>
        <fullName evidence="1">4-diphosphocytidyl-2C-methyl-D-erythritol synthase</fullName>
    </alternativeName>
    <alternativeName>
        <fullName evidence="1">MEP cytidylyltransferase</fullName>
        <shortName evidence="1">MCT</shortName>
    </alternativeName>
</protein>